<keyword id="KW-0903">Direct protein sequencing</keyword>
<keyword id="KW-0378">Hydrolase</keyword>
<keyword id="KW-0645">Protease</keyword>
<keyword id="KW-1185">Reference proteome</keyword>
<keyword id="KW-0720">Serine protease</keyword>
<sequence length="31" mass="3345">VIGGQECARDSHPWQAAVYHFSDIECGGVLV</sequence>
<accession>P12322</accession>
<proteinExistence type="evidence at protein level"/>
<organism>
    <name type="scientific">Cavia porcellus</name>
    <name type="common">Guinea pig</name>
    <dbReference type="NCBI Taxonomy" id="10141"/>
    <lineage>
        <taxon>Eukaryota</taxon>
        <taxon>Metazoa</taxon>
        <taxon>Chordata</taxon>
        <taxon>Craniata</taxon>
        <taxon>Vertebrata</taxon>
        <taxon>Euteleostomi</taxon>
        <taxon>Mammalia</taxon>
        <taxon>Eutheria</taxon>
        <taxon>Euarchontoglires</taxon>
        <taxon>Glires</taxon>
        <taxon>Rodentia</taxon>
        <taxon>Hystricomorpha</taxon>
        <taxon>Caviidae</taxon>
        <taxon>Cavia</taxon>
    </lineage>
</organism>
<reference key="1">
    <citation type="journal article" date="1983" name="Biochem. J.">
        <title>Purification and properties of guinea-pig submandibular-gland kallikrein.</title>
        <authorList>
            <person name="Fiedler F."/>
            <person name="Lemon M.J.C."/>
            <person name="Hirschauer C."/>
            <person name="Leysath G."/>
            <person name="Lottspeich F."/>
            <person name="Henschen A."/>
            <person name="Gau W."/>
            <person name="Bhoola K.D."/>
        </authorList>
    </citation>
    <scope>PROTEIN SEQUENCE</scope>
</reference>
<name>KLK1_CAVPO</name>
<dbReference type="EC" id="3.4.21.35"/>
<dbReference type="PIR" id="A18671">
    <property type="entry name" value="A18671"/>
</dbReference>
<dbReference type="SMR" id="P12322"/>
<dbReference type="InParanoid" id="P12322"/>
<dbReference type="Proteomes" id="UP000005447">
    <property type="component" value="Unassembled WGS sequence"/>
</dbReference>
<dbReference type="GO" id="GO:0004252">
    <property type="term" value="F:serine-type endopeptidase activity"/>
    <property type="evidence" value="ECO:0007669"/>
    <property type="project" value="UniProtKB-EC"/>
</dbReference>
<dbReference type="GO" id="GO:0006508">
    <property type="term" value="P:proteolysis"/>
    <property type="evidence" value="ECO:0007669"/>
    <property type="project" value="UniProtKB-KW"/>
</dbReference>
<dbReference type="Gene3D" id="2.40.10.10">
    <property type="entry name" value="Trypsin-like serine proteases"/>
    <property type="match status" value="1"/>
</dbReference>
<dbReference type="InterPro" id="IPR009003">
    <property type="entry name" value="Peptidase_S1_PA"/>
</dbReference>
<dbReference type="InterPro" id="IPR043504">
    <property type="entry name" value="Peptidase_S1_PA_chymotrypsin"/>
</dbReference>
<dbReference type="InterPro" id="IPR001254">
    <property type="entry name" value="Trypsin_dom"/>
</dbReference>
<dbReference type="Pfam" id="PF00089">
    <property type="entry name" value="Trypsin"/>
    <property type="match status" value="1"/>
</dbReference>
<dbReference type="SUPFAM" id="SSF50494">
    <property type="entry name" value="Trypsin-like serine proteases"/>
    <property type="match status" value="1"/>
</dbReference>
<evidence type="ECO:0000255" key="1">
    <source>
        <dbReference type="PROSITE-ProRule" id="PRU00274"/>
    </source>
</evidence>
<protein>
    <recommendedName>
        <fullName>Kallikrein-1</fullName>
        <ecNumber>3.4.21.35</ecNumber>
    </recommendedName>
    <alternativeName>
        <fullName>Glandular kallikrein, submandibular</fullName>
    </alternativeName>
    <alternativeName>
        <fullName>Tissue kallikrein</fullName>
    </alternativeName>
</protein>
<comment type="function">
    <text>Glandular kallikreins cleave Met-Lys and Arg-Ser bonds in kininogen to release Lys-bradykinin.</text>
</comment>
<comment type="catalytic activity">
    <reaction>
        <text>Preferential cleavage of Arg-|-Xaa bonds in small molecule substrates. Highly selective action to release kallidin (lysyl-bradykinin) from kininogen involves hydrolysis of Met-|-Xaa or Leu-|-Xaa.</text>
        <dbReference type="EC" id="3.4.21.35"/>
    </reaction>
</comment>
<comment type="similarity">
    <text evidence="1">Belongs to the peptidase S1 family. Kallikrein subfamily.</text>
</comment>
<feature type="chain" id="PRO_0000088700" description="Kallikrein-1">
    <location>
        <begin position="1"/>
        <end position="31" status="greater than"/>
    </location>
</feature>
<feature type="domain" description="Peptidase S1" evidence="1">
    <location>
        <begin position="1"/>
        <end position="31" status="greater than"/>
    </location>
</feature>
<feature type="non-terminal residue">
    <location>
        <position position="31"/>
    </location>
</feature>